<reference key="1">
    <citation type="journal article" date="2008" name="PLoS ONE">
        <title>Environmental adaptation: genomic analysis of the piezotolerant and psychrotolerant deep-sea iron reducing bacterium Shewanella piezotolerans WP3.</title>
        <authorList>
            <person name="Wang F."/>
            <person name="Wang J."/>
            <person name="Jian H."/>
            <person name="Zhang B."/>
            <person name="Li S."/>
            <person name="Wang F."/>
            <person name="Zeng X."/>
            <person name="Gao L."/>
            <person name="Bartlett D.H."/>
            <person name="Yu J."/>
            <person name="Hu S."/>
            <person name="Xiao X."/>
        </authorList>
    </citation>
    <scope>NUCLEOTIDE SEQUENCE [LARGE SCALE GENOMIC DNA]</scope>
    <source>
        <strain>WP3 / JCM 13877</strain>
    </source>
</reference>
<accession>B8CVJ3</accession>
<dbReference type="EC" id="5.1.3.20" evidence="1"/>
<dbReference type="EMBL" id="CP000472">
    <property type="protein sequence ID" value="ACJ31669.1"/>
    <property type="molecule type" value="Genomic_DNA"/>
</dbReference>
<dbReference type="RefSeq" id="WP_020914998.1">
    <property type="nucleotide sequence ID" value="NC_011566.1"/>
</dbReference>
<dbReference type="SMR" id="B8CVJ3"/>
<dbReference type="STRING" id="225849.swp_5055"/>
<dbReference type="KEGG" id="swp:swp_5055"/>
<dbReference type="eggNOG" id="COG0451">
    <property type="taxonomic scope" value="Bacteria"/>
</dbReference>
<dbReference type="HOGENOM" id="CLU_007383_1_3_6"/>
<dbReference type="OrthoDB" id="9803010at2"/>
<dbReference type="UniPathway" id="UPA00356">
    <property type="reaction ID" value="UER00440"/>
</dbReference>
<dbReference type="Proteomes" id="UP000000753">
    <property type="component" value="Chromosome"/>
</dbReference>
<dbReference type="GO" id="GO:0008712">
    <property type="term" value="F:ADP-glyceromanno-heptose 6-epimerase activity"/>
    <property type="evidence" value="ECO:0007669"/>
    <property type="project" value="UniProtKB-UniRule"/>
</dbReference>
<dbReference type="GO" id="GO:0050661">
    <property type="term" value="F:NADP binding"/>
    <property type="evidence" value="ECO:0007669"/>
    <property type="project" value="InterPro"/>
</dbReference>
<dbReference type="GO" id="GO:0097171">
    <property type="term" value="P:ADP-L-glycero-beta-D-manno-heptose biosynthetic process"/>
    <property type="evidence" value="ECO:0007669"/>
    <property type="project" value="UniProtKB-UniPathway"/>
</dbReference>
<dbReference type="GO" id="GO:0005975">
    <property type="term" value="P:carbohydrate metabolic process"/>
    <property type="evidence" value="ECO:0007669"/>
    <property type="project" value="UniProtKB-UniRule"/>
</dbReference>
<dbReference type="CDD" id="cd05248">
    <property type="entry name" value="ADP_GME_SDR_e"/>
    <property type="match status" value="1"/>
</dbReference>
<dbReference type="Gene3D" id="3.40.50.720">
    <property type="entry name" value="NAD(P)-binding Rossmann-like Domain"/>
    <property type="match status" value="1"/>
</dbReference>
<dbReference type="Gene3D" id="3.90.25.10">
    <property type="entry name" value="UDP-galactose 4-epimerase, domain 1"/>
    <property type="match status" value="1"/>
</dbReference>
<dbReference type="HAMAP" id="MF_01601">
    <property type="entry name" value="Heptose_epimerase"/>
    <property type="match status" value="1"/>
</dbReference>
<dbReference type="InterPro" id="IPR001509">
    <property type="entry name" value="Epimerase_deHydtase"/>
</dbReference>
<dbReference type="InterPro" id="IPR011912">
    <property type="entry name" value="Heptose_epim"/>
</dbReference>
<dbReference type="InterPro" id="IPR036291">
    <property type="entry name" value="NAD(P)-bd_dom_sf"/>
</dbReference>
<dbReference type="NCBIfam" id="TIGR02197">
    <property type="entry name" value="heptose_epim"/>
    <property type="match status" value="1"/>
</dbReference>
<dbReference type="NCBIfam" id="NF008360">
    <property type="entry name" value="PRK11150.1"/>
    <property type="match status" value="1"/>
</dbReference>
<dbReference type="PANTHER" id="PTHR43103:SF3">
    <property type="entry name" value="ADP-L-GLYCERO-D-MANNO-HEPTOSE-6-EPIMERASE"/>
    <property type="match status" value="1"/>
</dbReference>
<dbReference type="PANTHER" id="PTHR43103">
    <property type="entry name" value="NUCLEOSIDE-DIPHOSPHATE-SUGAR EPIMERASE"/>
    <property type="match status" value="1"/>
</dbReference>
<dbReference type="Pfam" id="PF01370">
    <property type="entry name" value="Epimerase"/>
    <property type="match status" value="1"/>
</dbReference>
<dbReference type="SUPFAM" id="SSF51735">
    <property type="entry name" value="NAD(P)-binding Rossmann-fold domains"/>
    <property type="match status" value="1"/>
</dbReference>
<proteinExistence type="inferred from homology"/>
<sequence length="317" mass="35632">MIVVTGAAGFIGSNLVKALNDMGRNDIIAVDDLTDGTKMFNLADCEIADYLDKDQFLEQIIAGEFDGKIEVIFHQGACSSTTEWDGKFMMSNNYEYSKTLLQFCDRTKCQYIYASSASVYGGSEKFIEQRDLEKPLNVYAYSKFLFDQYVRQQKPNCQVAGLRYFNVYGPREQHKGGMASVAFHFNNQLNANGICRLFEGVDGYENGQQLRDFVYVEDVVKVNLWLWQNSEVSGIFNCGTGQAQSFNDVANAVIAHHGKGAVEYIPFPDKLKGAYQSYTQADLTKLRAAGYTAEFKTVEQAVPEYLSWLATQHFIGE</sequence>
<feature type="chain" id="PRO_1000190411" description="ADP-L-glycero-D-manno-heptose-6-epimerase">
    <location>
        <begin position="1"/>
        <end position="317"/>
    </location>
</feature>
<feature type="active site" description="Proton acceptor" evidence="1">
    <location>
        <position position="139"/>
    </location>
</feature>
<feature type="active site" description="Proton acceptor" evidence="1">
    <location>
        <position position="175"/>
    </location>
</feature>
<feature type="binding site" evidence="1">
    <location>
        <begin position="10"/>
        <end position="11"/>
    </location>
    <ligand>
        <name>NADP(+)</name>
        <dbReference type="ChEBI" id="CHEBI:58349"/>
    </ligand>
</feature>
<feature type="binding site" evidence="1">
    <location>
        <begin position="31"/>
        <end position="32"/>
    </location>
    <ligand>
        <name>NADP(+)</name>
        <dbReference type="ChEBI" id="CHEBI:58349"/>
    </ligand>
</feature>
<feature type="binding site" evidence="1">
    <location>
        <position position="38"/>
    </location>
    <ligand>
        <name>NADP(+)</name>
        <dbReference type="ChEBI" id="CHEBI:58349"/>
    </ligand>
</feature>
<feature type="binding site" evidence="1">
    <location>
        <position position="53"/>
    </location>
    <ligand>
        <name>NADP(+)</name>
        <dbReference type="ChEBI" id="CHEBI:58349"/>
    </ligand>
</feature>
<feature type="binding site" evidence="1">
    <location>
        <begin position="75"/>
        <end position="79"/>
    </location>
    <ligand>
        <name>NADP(+)</name>
        <dbReference type="ChEBI" id="CHEBI:58349"/>
    </ligand>
</feature>
<feature type="binding site" evidence="1">
    <location>
        <position position="92"/>
    </location>
    <ligand>
        <name>NADP(+)</name>
        <dbReference type="ChEBI" id="CHEBI:58349"/>
    </ligand>
</feature>
<feature type="binding site" evidence="1">
    <location>
        <position position="143"/>
    </location>
    <ligand>
        <name>NADP(+)</name>
        <dbReference type="ChEBI" id="CHEBI:58349"/>
    </ligand>
</feature>
<feature type="binding site" evidence="1">
    <location>
        <position position="166"/>
    </location>
    <ligand>
        <name>substrate</name>
    </ligand>
</feature>
<feature type="binding site" evidence="1">
    <location>
        <position position="167"/>
    </location>
    <ligand>
        <name>NADP(+)</name>
        <dbReference type="ChEBI" id="CHEBI:58349"/>
    </ligand>
</feature>
<feature type="binding site" evidence="1">
    <location>
        <position position="175"/>
    </location>
    <ligand>
        <name>NADP(+)</name>
        <dbReference type="ChEBI" id="CHEBI:58349"/>
    </ligand>
</feature>
<feature type="binding site" evidence="1">
    <location>
        <position position="177"/>
    </location>
    <ligand>
        <name>substrate</name>
    </ligand>
</feature>
<feature type="binding site" evidence="1">
    <location>
        <position position="184"/>
    </location>
    <ligand>
        <name>substrate</name>
    </ligand>
</feature>
<feature type="binding site" evidence="1">
    <location>
        <begin position="198"/>
        <end position="201"/>
    </location>
    <ligand>
        <name>substrate</name>
    </ligand>
</feature>
<feature type="binding site" evidence="1">
    <location>
        <position position="211"/>
    </location>
    <ligand>
        <name>substrate</name>
    </ligand>
</feature>
<feature type="binding site" evidence="1">
    <location>
        <position position="275"/>
    </location>
    <ligand>
        <name>substrate</name>
    </ligand>
</feature>
<keyword id="KW-0119">Carbohydrate metabolism</keyword>
<keyword id="KW-0413">Isomerase</keyword>
<keyword id="KW-0521">NADP</keyword>
<protein>
    <recommendedName>
        <fullName evidence="1">ADP-L-glycero-D-manno-heptose-6-epimerase</fullName>
        <ecNumber evidence="1">5.1.3.20</ecNumber>
    </recommendedName>
    <alternativeName>
        <fullName evidence="1">ADP-L-glycero-beta-D-manno-heptose-6-epimerase</fullName>
        <shortName evidence="1">ADP-glyceromanno-heptose 6-epimerase</shortName>
        <shortName evidence="1">ADP-hep 6-epimerase</shortName>
        <shortName evidence="1">AGME</shortName>
    </alternativeName>
</protein>
<name>HLDD_SHEPW</name>
<comment type="function">
    <text evidence="1">Catalyzes the interconversion between ADP-D-glycero-beta-D-manno-heptose and ADP-L-glycero-beta-D-manno-heptose via an epimerization at carbon 6 of the heptose.</text>
</comment>
<comment type="catalytic activity">
    <reaction evidence="1">
        <text>ADP-D-glycero-beta-D-manno-heptose = ADP-L-glycero-beta-D-manno-heptose</text>
        <dbReference type="Rhea" id="RHEA:17577"/>
        <dbReference type="ChEBI" id="CHEBI:59967"/>
        <dbReference type="ChEBI" id="CHEBI:61506"/>
        <dbReference type="EC" id="5.1.3.20"/>
    </reaction>
</comment>
<comment type="cofactor">
    <cofactor evidence="1">
        <name>NADP(+)</name>
        <dbReference type="ChEBI" id="CHEBI:58349"/>
    </cofactor>
    <text evidence="1">Binds 1 NADP(+) per subunit.</text>
</comment>
<comment type="pathway">
    <text evidence="1">Nucleotide-sugar biosynthesis; ADP-L-glycero-beta-D-manno-heptose biosynthesis; ADP-L-glycero-beta-D-manno-heptose from D-glycero-beta-D-manno-heptose 7-phosphate: step 4/4.</text>
</comment>
<comment type="subunit">
    <text evidence="1">Homopentamer.</text>
</comment>
<comment type="domain">
    <text evidence="1">Contains a large N-terminal NADP-binding domain, and a smaller C-terminal substrate-binding domain.</text>
</comment>
<comment type="similarity">
    <text evidence="1">Belongs to the NAD(P)-dependent epimerase/dehydratase family. HldD subfamily.</text>
</comment>
<organism>
    <name type="scientific">Shewanella piezotolerans (strain WP3 / JCM 13877)</name>
    <dbReference type="NCBI Taxonomy" id="225849"/>
    <lineage>
        <taxon>Bacteria</taxon>
        <taxon>Pseudomonadati</taxon>
        <taxon>Pseudomonadota</taxon>
        <taxon>Gammaproteobacteria</taxon>
        <taxon>Alteromonadales</taxon>
        <taxon>Shewanellaceae</taxon>
        <taxon>Shewanella</taxon>
    </lineage>
</organism>
<gene>
    <name evidence="1" type="primary">hldD</name>
    <name type="ordered locus">swp_5055</name>
</gene>
<evidence type="ECO:0000255" key="1">
    <source>
        <dbReference type="HAMAP-Rule" id="MF_01601"/>
    </source>
</evidence>